<keyword id="KW-0194">Cyanelle</keyword>
<keyword id="KW-0472">Membrane</keyword>
<keyword id="KW-0602">Photosynthesis</keyword>
<keyword id="KW-0604">Photosystem II</keyword>
<keyword id="KW-0934">Plastid</keyword>
<keyword id="KW-0674">Reaction center</keyword>
<keyword id="KW-0793">Thylakoid</keyword>
<keyword id="KW-0812">Transmembrane</keyword>
<keyword id="KW-1133">Transmembrane helix</keyword>
<geneLocation type="cyanelle"/>
<reference key="1">
    <citation type="journal article" date="1989" name="Nucleic Acids Res.">
        <title>Nucleotide sequence of the psbK gene of the cyanelle genome of Cyanophora paradoxa.</title>
        <authorList>
            <person name="Stirewalt V.L."/>
            <person name="Bryant D.A."/>
        </authorList>
    </citation>
    <scope>NUCLEOTIDE SEQUENCE [GENOMIC DNA]</scope>
    <source>
        <strain>UTEX LB 555 / Pringsheim</strain>
    </source>
</reference>
<reference key="2">
    <citation type="journal article" date="1995" name="Plant Mol. Biol. Rep.">
        <title>Nucleotide sequence of the cyanelle DNA from Cyanophora paradoxa.</title>
        <authorList>
            <person name="Stirewalt V.L."/>
            <person name="Michalowski C.B."/>
            <person name="Loeffelhardt W."/>
            <person name="Bohnert H.J."/>
            <person name="Bryant D.A."/>
        </authorList>
    </citation>
    <scope>NUCLEOTIDE SEQUENCE [LARGE SCALE GENOMIC DNA]</scope>
    <source>
        <strain>UTEX LB 555 / Pringsheim</strain>
    </source>
</reference>
<reference key="3">
    <citation type="book" date="1997" name="Eukaryotism and symbiosis">
        <title>The complete sequence of the cyanelle genome of Cyanophora paradoxa: the genetic complexity of a primitive plastid.</title>
        <editorList>
            <person name="Schenk H.E.A."/>
            <person name="Herrmann R."/>
            <person name="Jeon K.W."/>
            <person name="Mueller N.E."/>
            <person name="Schwemmler W."/>
        </editorList>
        <authorList>
            <person name="Loeffelhardt W."/>
            <person name="Stirewalt V.L."/>
            <person name="Michalowski C.B."/>
            <person name="Annarella M."/>
            <person name="Farley J.Y."/>
            <person name="Schluchter W.M."/>
            <person name="Chung S."/>
            <person name="Newmann-Spallart C."/>
            <person name="Steiner J.M."/>
            <person name="Jakowitsch J."/>
            <person name="Bohnert H.J."/>
            <person name="Bryant D.A."/>
        </authorList>
    </citation>
    <scope>NUCLEOTIDE SEQUENCE [LARGE SCALE GENOMIC DNA]</scope>
    <source>
        <strain>UTEX LB 555 / Pringsheim</strain>
    </source>
</reference>
<protein>
    <recommendedName>
        <fullName evidence="1">Photosystem II reaction center protein K</fullName>
        <shortName evidence="1">PSII-K</shortName>
    </recommendedName>
</protein>
<gene>
    <name evidence="1" type="primary">psbK</name>
</gene>
<feature type="propeptide" id="PRO_0000029453" evidence="1">
    <location>
        <begin position="1"/>
        <end position="8"/>
    </location>
</feature>
<feature type="chain" id="PRO_0000029454" description="Photosystem II reaction center protein K" evidence="1">
    <location>
        <begin position="9"/>
        <end position="45"/>
    </location>
</feature>
<feature type="transmembrane region" description="Helical" evidence="1">
    <location>
        <begin position="23"/>
        <end position="43"/>
    </location>
</feature>
<sequence length="45" mass="5053">MLMSLFLAKLPAAYALFDPIVDILPIIPLFFLLLAFVWQAAIGFK</sequence>
<proteinExistence type="inferred from homology"/>
<evidence type="ECO:0000255" key="1">
    <source>
        <dbReference type="HAMAP-Rule" id="MF_00441"/>
    </source>
</evidence>
<accession>P14237</accession>
<name>PSBK_CYAPA</name>
<organism>
    <name type="scientific">Cyanophora paradoxa</name>
    <dbReference type="NCBI Taxonomy" id="2762"/>
    <lineage>
        <taxon>Eukaryota</taxon>
        <taxon>Glaucocystophyceae</taxon>
        <taxon>Cyanophoraceae</taxon>
        <taxon>Cyanophora</taxon>
    </lineage>
</organism>
<comment type="function">
    <text evidence="1">One of the components of the core complex of photosystem II (PSII). PSII is a light-driven water:plastoquinone oxidoreductase that uses light energy to abstract electrons from H(2)O, generating O(2) and a proton gradient subsequently used for ATP formation. It consists of a core antenna complex that captures photons, and an electron transfer chain that converts photonic excitation into a charge separation.</text>
</comment>
<comment type="subunit">
    <text evidence="1">PSII is composed of 1 copy each of membrane proteins PsbA, PsbB, PsbC, PsbD, PsbE, PsbF, PsbH, PsbI, PsbJ, PsbK, PsbL, PsbM, PsbT, PsbX, PsbY, PsbZ, Psb30/Ycf12, at least 3 peripheral proteins of the oxygen-evolving complex and a large number of cofactors. It forms dimeric complexes.</text>
</comment>
<comment type="subcellular location">
    <subcellularLocation>
        <location evidence="1">Plastid</location>
        <location evidence="1">Cyanelle thylakoid membrane</location>
        <topology evidence="1">Single-pass membrane protein</topology>
    </subcellularLocation>
</comment>
<comment type="similarity">
    <text evidence="1">Belongs to the PsbK family.</text>
</comment>
<dbReference type="EMBL" id="X16975">
    <property type="protein sequence ID" value="CAA34847.1"/>
    <property type="molecule type" value="Genomic_DNA"/>
</dbReference>
<dbReference type="EMBL" id="U30821">
    <property type="protein sequence ID" value="AAA81280.1"/>
    <property type="molecule type" value="Genomic_DNA"/>
</dbReference>
<dbReference type="PIR" id="S06917">
    <property type="entry name" value="S06917"/>
</dbReference>
<dbReference type="RefSeq" id="NP_043249.1">
    <property type="nucleotide sequence ID" value="NC_001675.1"/>
</dbReference>
<dbReference type="SMR" id="P14237"/>
<dbReference type="GeneID" id="801669"/>
<dbReference type="GO" id="GO:0033115">
    <property type="term" value="C:cyanelle thylakoid membrane"/>
    <property type="evidence" value="ECO:0007669"/>
    <property type="project" value="UniProtKB-SubCell"/>
</dbReference>
<dbReference type="GO" id="GO:0009539">
    <property type="term" value="C:photosystem II reaction center"/>
    <property type="evidence" value="ECO:0007669"/>
    <property type="project" value="InterPro"/>
</dbReference>
<dbReference type="GO" id="GO:0015979">
    <property type="term" value="P:photosynthesis"/>
    <property type="evidence" value="ECO:0007669"/>
    <property type="project" value="UniProtKB-UniRule"/>
</dbReference>
<dbReference type="HAMAP" id="MF_00441">
    <property type="entry name" value="PSII_PsbK"/>
    <property type="match status" value="1"/>
</dbReference>
<dbReference type="InterPro" id="IPR003687">
    <property type="entry name" value="PSII_PsbK"/>
</dbReference>
<dbReference type="InterPro" id="IPR037270">
    <property type="entry name" value="PSII_PsbK_sf"/>
</dbReference>
<dbReference type="NCBIfam" id="NF002715">
    <property type="entry name" value="PRK02553.1"/>
    <property type="match status" value="1"/>
</dbReference>
<dbReference type="PANTHER" id="PTHR35325">
    <property type="match status" value="1"/>
</dbReference>
<dbReference type="PANTHER" id="PTHR35325:SF1">
    <property type="entry name" value="PHOTOSYSTEM II REACTION CENTER PROTEIN K"/>
    <property type="match status" value="1"/>
</dbReference>
<dbReference type="Pfam" id="PF02533">
    <property type="entry name" value="PsbK"/>
    <property type="match status" value="1"/>
</dbReference>
<dbReference type="SUPFAM" id="SSF161037">
    <property type="entry name" value="Photosystem II reaction center protein K, PsbK"/>
    <property type="match status" value="1"/>
</dbReference>